<sequence length="79" mass="8694">MGGFTSIWHWVIVLLVIVLLFGAKKIPELAKGLGSGIKNFKKAVKDDEEEAKNEPKTLDAQATQTKAHESSEIKSKQES</sequence>
<dbReference type="EMBL" id="CP001217">
    <property type="protein sequence ID" value="ACJ07474.1"/>
    <property type="molecule type" value="Genomic_DNA"/>
</dbReference>
<dbReference type="SMR" id="B6JKP6"/>
<dbReference type="KEGG" id="hpp:HPP12_0317"/>
<dbReference type="HOGENOM" id="CLU_086034_5_4_7"/>
<dbReference type="Proteomes" id="UP000008198">
    <property type="component" value="Chromosome"/>
</dbReference>
<dbReference type="GO" id="GO:0033281">
    <property type="term" value="C:TAT protein transport complex"/>
    <property type="evidence" value="ECO:0007669"/>
    <property type="project" value="UniProtKB-UniRule"/>
</dbReference>
<dbReference type="GO" id="GO:0008320">
    <property type="term" value="F:protein transmembrane transporter activity"/>
    <property type="evidence" value="ECO:0007669"/>
    <property type="project" value="UniProtKB-UniRule"/>
</dbReference>
<dbReference type="GO" id="GO:0043953">
    <property type="term" value="P:protein transport by the Tat complex"/>
    <property type="evidence" value="ECO:0007669"/>
    <property type="project" value="UniProtKB-UniRule"/>
</dbReference>
<dbReference type="Gene3D" id="1.20.5.3310">
    <property type="match status" value="1"/>
</dbReference>
<dbReference type="HAMAP" id="MF_00236">
    <property type="entry name" value="TatA_E"/>
    <property type="match status" value="1"/>
</dbReference>
<dbReference type="InterPro" id="IPR003369">
    <property type="entry name" value="TatA/B/E"/>
</dbReference>
<dbReference type="InterPro" id="IPR006312">
    <property type="entry name" value="TatA/E"/>
</dbReference>
<dbReference type="NCBIfam" id="TIGR01411">
    <property type="entry name" value="tatAE"/>
    <property type="match status" value="1"/>
</dbReference>
<dbReference type="PANTHER" id="PTHR42982">
    <property type="entry name" value="SEC-INDEPENDENT PROTEIN TRANSLOCASE PROTEIN TATA"/>
    <property type="match status" value="1"/>
</dbReference>
<dbReference type="PANTHER" id="PTHR42982:SF1">
    <property type="entry name" value="SEC-INDEPENDENT PROTEIN TRANSLOCASE PROTEIN TATA"/>
    <property type="match status" value="1"/>
</dbReference>
<dbReference type="Pfam" id="PF02416">
    <property type="entry name" value="TatA_B_E"/>
    <property type="match status" value="1"/>
</dbReference>
<gene>
    <name evidence="1" type="primary">tatA</name>
    <name type="ordered locus">HPP12_0317</name>
</gene>
<proteinExistence type="inferred from homology"/>
<comment type="function">
    <text evidence="1">Part of the twin-arginine translocation (Tat) system that transports large folded proteins containing a characteristic twin-arginine motif in their signal peptide across membranes. TatA could form the protein-conducting channel of the Tat system.</text>
</comment>
<comment type="subunit">
    <text evidence="1">The Tat system comprises two distinct complexes: a TatABC complex, containing multiple copies of TatA, TatB and TatC subunits, and a separate TatA complex, containing only TatA subunits. Substrates initially bind to the TatABC complex, which probably triggers association of the separate TatA complex to form the active translocon.</text>
</comment>
<comment type="subcellular location">
    <subcellularLocation>
        <location evidence="1">Cell inner membrane</location>
        <topology evidence="1">Single-pass membrane protein</topology>
    </subcellularLocation>
</comment>
<comment type="similarity">
    <text evidence="1">Belongs to the TatA/E family.</text>
</comment>
<feature type="chain" id="PRO_1000197873" description="Sec-independent protein translocase protein TatA">
    <location>
        <begin position="1"/>
        <end position="79"/>
    </location>
</feature>
<feature type="transmembrane region" description="Helical" evidence="1">
    <location>
        <begin position="1"/>
        <end position="21"/>
    </location>
</feature>
<feature type="region of interest" description="Disordered" evidence="2">
    <location>
        <begin position="48"/>
        <end position="79"/>
    </location>
</feature>
<feature type="compositionally biased region" description="Basic and acidic residues" evidence="2">
    <location>
        <begin position="66"/>
        <end position="79"/>
    </location>
</feature>
<reference key="1">
    <citation type="submission" date="2008-10" db="EMBL/GenBank/DDBJ databases">
        <title>The complete genome sequence of Helicobacter pylori strain P12.</title>
        <authorList>
            <person name="Fischer W."/>
            <person name="Windhager L."/>
            <person name="Karnholz A."/>
            <person name="Zeiller M."/>
            <person name="Zimmer R."/>
            <person name="Haas R."/>
        </authorList>
    </citation>
    <scope>NUCLEOTIDE SEQUENCE [LARGE SCALE GENOMIC DNA]</scope>
    <source>
        <strain>P12</strain>
    </source>
</reference>
<keyword id="KW-0997">Cell inner membrane</keyword>
<keyword id="KW-1003">Cell membrane</keyword>
<keyword id="KW-0472">Membrane</keyword>
<keyword id="KW-0653">Protein transport</keyword>
<keyword id="KW-0811">Translocation</keyword>
<keyword id="KW-0812">Transmembrane</keyword>
<keyword id="KW-1133">Transmembrane helix</keyword>
<keyword id="KW-0813">Transport</keyword>
<name>TATA_HELP2</name>
<organism>
    <name type="scientific">Helicobacter pylori (strain P12)</name>
    <dbReference type="NCBI Taxonomy" id="570508"/>
    <lineage>
        <taxon>Bacteria</taxon>
        <taxon>Pseudomonadati</taxon>
        <taxon>Campylobacterota</taxon>
        <taxon>Epsilonproteobacteria</taxon>
        <taxon>Campylobacterales</taxon>
        <taxon>Helicobacteraceae</taxon>
        <taxon>Helicobacter</taxon>
    </lineage>
</organism>
<protein>
    <recommendedName>
        <fullName evidence="1">Sec-independent protein translocase protein TatA</fullName>
    </recommendedName>
</protein>
<accession>B6JKP6</accession>
<evidence type="ECO:0000255" key="1">
    <source>
        <dbReference type="HAMAP-Rule" id="MF_00236"/>
    </source>
</evidence>
<evidence type="ECO:0000256" key="2">
    <source>
        <dbReference type="SAM" id="MobiDB-lite"/>
    </source>
</evidence>